<proteinExistence type="inferred from homology"/>
<comment type="function">
    <text evidence="1">Catalyzes the phosphorylation of the position 2 hydroxy group of 4-diphosphocytidyl-2C-methyl-D-erythritol.</text>
</comment>
<comment type="catalytic activity">
    <reaction evidence="1">
        <text>4-CDP-2-C-methyl-D-erythritol + ATP = 4-CDP-2-C-methyl-D-erythritol 2-phosphate + ADP + H(+)</text>
        <dbReference type="Rhea" id="RHEA:18437"/>
        <dbReference type="ChEBI" id="CHEBI:15378"/>
        <dbReference type="ChEBI" id="CHEBI:30616"/>
        <dbReference type="ChEBI" id="CHEBI:57823"/>
        <dbReference type="ChEBI" id="CHEBI:57919"/>
        <dbReference type="ChEBI" id="CHEBI:456216"/>
        <dbReference type="EC" id="2.7.1.148"/>
    </reaction>
</comment>
<comment type="pathway">
    <text evidence="1">Isoprenoid biosynthesis; isopentenyl diphosphate biosynthesis via DXP pathway; isopentenyl diphosphate from 1-deoxy-D-xylulose 5-phosphate: step 3/6.</text>
</comment>
<comment type="similarity">
    <text evidence="1">Belongs to the GHMP kinase family. IspE subfamily.</text>
</comment>
<feature type="chain" id="PRO_0000189230" description="4-diphosphocytidyl-2-C-methyl-D-erythritol kinase">
    <location>
        <begin position="1"/>
        <end position="291"/>
    </location>
</feature>
<feature type="active site" evidence="1">
    <location>
        <position position="10"/>
    </location>
</feature>
<feature type="active site" evidence="1">
    <location>
        <position position="136"/>
    </location>
</feature>
<feature type="binding site" evidence="1">
    <location>
        <begin position="94"/>
        <end position="104"/>
    </location>
    <ligand>
        <name>ATP</name>
        <dbReference type="ChEBI" id="CHEBI:30616"/>
    </ligand>
</feature>
<reference key="1">
    <citation type="journal article" date="2001" name="Science">
        <title>Comparative genomics of Listeria species.</title>
        <authorList>
            <person name="Glaser P."/>
            <person name="Frangeul L."/>
            <person name="Buchrieser C."/>
            <person name="Rusniok C."/>
            <person name="Amend A."/>
            <person name="Baquero F."/>
            <person name="Berche P."/>
            <person name="Bloecker H."/>
            <person name="Brandt P."/>
            <person name="Chakraborty T."/>
            <person name="Charbit A."/>
            <person name="Chetouani F."/>
            <person name="Couve E."/>
            <person name="de Daruvar A."/>
            <person name="Dehoux P."/>
            <person name="Domann E."/>
            <person name="Dominguez-Bernal G."/>
            <person name="Duchaud E."/>
            <person name="Durant L."/>
            <person name="Dussurget O."/>
            <person name="Entian K.-D."/>
            <person name="Fsihi H."/>
            <person name="Garcia-del Portillo F."/>
            <person name="Garrido P."/>
            <person name="Gautier L."/>
            <person name="Goebel W."/>
            <person name="Gomez-Lopez N."/>
            <person name="Hain T."/>
            <person name="Hauf J."/>
            <person name="Jackson D."/>
            <person name="Jones L.-M."/>
            <person name="Kaerst U."/>
            <person name="Kreft J."/>
            <person name="Kuhn M."/>
            <person name="Kunst F."/>
            <person name="Kurapkat G."/>
            <person name="Madueno E."/>
            <person name="Maitournam A."/>
            <person name="Mata Vicente J."/>
            <person name="Ng E."/>
            <person name="Nedjari H."/>
            <person name="Nordsiek G."/>
            <person name="Novella S."/>
            <person name="de Pablos B."/>
            <person name="Perez-Diaz J.-C."/>
            <person name="Purcell R."/>
            <person name="Remmel B."/>
            <person name="Rose M."/>
            <person name="Schlueter T."/>
            <person name="Simoes N."/>
            <person name="Tierrez A."/>
            <person name="Vazquez-Boland J.-A."/>
            <person name="Voss H."/>
            <person name="Wehland J."/>
            <person name="Cossart P."/>
        </authorList>
    </citation>
    <scope>NUCLEOTIDE SEQUENCE [LARGE SCALE GENOMIC DNA]</scope>
    <source>
        <strain>ATCC BAA-680 / CLIP 11262</strain>
    </source>
</reference>
<keyword id="KW-0067">ATP-binding</keyword>
<keyword id="KW-0414">Isoprene biosynthesis</keyword>
<keyword id="KW-0418">Kinase</keyword>
<keyword id="KW-0547">Nucleotide-binding</keyword>
<keyword id="KW-0808">Transferase</keyword>
<organism>
    <name type="scientific">Listeria innocua serovar 6a (strain ATCC BAA-680 / CLIP 11262)</name>
    <dbReference type="NCBI Taxonomy" id="272626"/>
    <lineage>
        <taxon>Bacteria</taxon>
        <taxon>Bacillati</taxon>
        <taxon>Bacillota</taxon>
        <taxon>Bacilli</taxon>
        <taxon>Bacillales</taxon>
        <taxon>Listeriaceae</taxon>
        <taxon>Listeria</taxon>
    </lineage>
</organism>
<evidence type="ECO:0000255" key="1">
    <source>
        <dbReference type="HAMAP-Rule" id="MF_00061"/>
    </source>
</evidence>
<accession>Q92F77</accession>
<dbReference type="EC" id="2.7.1.148" evidence="1"/>
<dbReference type="EMBL" id="AL596163">
    <property type="protein sequence ID" value="CAC95462.1"/>
    <property type="molecule type" value="Genomic_DNA"/>
</dbReference>
<dbReference type="PIR" id="AF1461">
    <property type="entry name" value="AF1461"/>
</dbReference>
<dbReference type="RefSeq" id="WP_003759978.1">
    <property type="nucleotide sequence ID" value="NC_003212.1"/>
</dbReference>
<dbReference type="SMR" id="Q92F77"/>
<dbReference type="STRING" id="272626.gene:17564541"/>
<dbReference type="GeneID" id="93233664"/>
<dbReference type="KEGG" id="lin:lin0229"/>
<dbReference type="eggNOG" id="COG1947">
    <property type="taxonomic scope" value="Bacteria"/>
</dbReference>
<dbReference type="HOGENOM" id="CLU_053057_1_1_9"/>
<dbReference type="OrthoDB" id="9809438at2"/>
<dbReference type="UniPathway" id="UPA00056">
    <property type="reaction ID" value="UER00094"/>
</dbReference>
<dbReference type="Proteomes" id="UP000002513">
    <property type="component" value="Chromosome"/>
</dbReference>
<dbReference type="GO" id="GO:0050515">
    <property type="term" value="F:4-(cytidine 5'-diphospho)-2-C-methyl-D-erythritol kinase activity"/>
    <property type="evidence" value="ECO:0007669"/>
    <property type="project" value="UniProtKB-UniRule"/>
</dbReference>
<dbReference type="GO" id="GO:0005524">
    <property type="term" value="F:ATP binding"/>
    <property type="evidence" value="ECO:0007669"/>
    <property type="project" value="UniProtKB-UniRule"/>
</dbReference>
<dbReference type="GO" id="GO:0019288">
    <property type="term" value="P:isopentenyl diphosphate biosynthetic process, methylerythritol 4-phosphate pathway"/>
    <property type="evidence" value="ECO:0007669"/>
    <property type="project" value="UniProtKB-UniRule"/>
</dbReference>
<dbReference type="GO" id="GO:0016114">
    <property type="term" value="P:terpenoid biosynthetic process"/>
    <property type="evidence" value="ECO:0007669"/>
    <property type="project" value="InterPro"/>
</dbReference>
<dbReference type="FunFam" id="3.30.230.10:FF:000029">
    <property type="entry name" value="4-diphosphocytidyl-2-C-methyl-D-erythritol kinase"/>
    <property type="match status" value="1"/>
</dbReference>
<dbReference type="FunFam" id="3.30.70.890:FF:000006">
    <property type="entry name" value="4-diphosphocytidyl-2-C-methyl-D-erythritol kinase"/>
    <property type="match status" value="1"/>
</dbReference>
<dbReference type="Gene3D" id="3.30.230.10">
    <property type="match status" value="1"/>
</dbReference>
<dbReference type="Gene3D" id="3.30.70.890">
    <property type="entry name" value="GHMP kinase, C-terminal domain"/>
    <property type="match status" value="1"/>
</dbReference>
<dbReference type="HAMAP" id="MF_00061">
    <property type="entry name" value="IspE"/>
    <property type="match status" value="1"/>
</dbReference>
<dbReference type="InterPro" id="IPR013750">
    <property type="entry name" value="GHMP_kinase_C_dom"/>
</dbReference>
<dbReference type="InterPro" id="IPR036554">
    <property type="entry name" value="GHMP_kinase_C_sf"/>
</dbReference>
<dbReference type="InterPro" id="IPR006204">
    <property type="entry name" value="GHMP_kinase_N_dom"/>
</dbReference>
<dbReference type="InterPro" id="IPR004424">
    <property type="entry name" value="IspE"/>
</dbReference>
<dbReference type="InterPro" id="IPR020568">
    <property type="entry name" value="Ribosomal_Su5_D2-typ_SF"/>
</dbReference>
<dbReference type="InterPro" id="IPR014721">
    <property type="entry name" value="Ribsml_uS5_D2-typ_fold_subgr"/>
</dbReference>
<dbReference type="NCBIfam" id="TIGR00154">
    <property type="entry name" value="ispE"/>
    <property type="match status" value="1"/>
</dbReference>
<dbReference type="NCBIfam" id="NF011202">
    <property type="entry name" value="PRK14608.1"/>
    <property type="match status" value="1"/>
</dbReference>
<dbReference type="PANTHER" id="PTHR43527">
    <property type="entry name" value="4-DIPHOSPHOCYTIDYL-2-C-METHYL-D-ERYTHRITOL KINASE, CHLOROPLASTIC"/>
    <property type="match status" value="1"/>
</dbReference>
<dbReference type="PANTHER" id="PTHR43527:SF2">
    <property type="entry name" value="4-DIPHOSPHOCYTIDYL-2-C-METHYL-D-ERYTHRITOL KINASE, CHLOROPLASTIC"/>
    <property type="match status" value="1"/>
</dbReference>
<dbReference type="Pfam" id="PF08544">
    <property type="entry name" value="GHMP_kinases_C"/>
    <property type="match status" value="1"/>
</dbReference>
<dbReference type="Pfam" id="PF00288">
    <property type="entry name" value="GHMP_kinases_N"/>
    <property type="match status" value="1"/>
</dbReference>
<dbReference type="PIRSF" id="PIRSF010376">
    <property type="entry name" value="IspE"/>
    <property type="match status" value="1"/>
</dbReference>
<dbReference type="SUPFAM" id="SSF55060">
    <property type="entry name" value="GHMP Kinase, C-terminal domain"/>
    <property type="match status" value="1"/>
</dbReference>
<dbReference type="SUPFAM" id="SSF54211">
    <property type="entry name" value="Ribosomal protein S5 domain 2-like"/>
    <property type="match status" value="1"/>
</dbReference>
<name>ISPE_LISIN</name>
<protein>
    <recommendedName>
        <fullName evidence="1">4-diphosphocytidyl-2-C-methyl-D-erythritol kinase</fullName>
        <shortName evidence="1">CMK</shortName>
        <ecNumber evidence="1">2.7.1.148</ecNumber>
    </recommendedName>
    <alternativeName>
        <fullName evidence="1">4-(cytidine-5'-diphospho)-2-C-methyl-D-erythritol kinase</fullName>
    </alternativeName>
</protein>
<gene>
    <name evidence="1" type="primary">ispE</name>
    <name type="ordered locus">lin0229</name>
</gene>
<sequence>MKISITAPAKINLSLDALYKREDGYHEVEMVMTTIDLADRLFLERLDEDKIVLDVKAHFIPEDRRNLIYQAALLLKNRFNIKMGVRITIDKHIPVSAGLAGGSSDAAAALKGLNIIWELGLSIEELAEISSEIGSDIAFCVYGGTALATGRGEKISALPNMPGCWIVLAKPSISVSTPTIYKELQVDNVEHPNTEKMIESIKNGDLDGIFASTGNVLESVTLEKNPQVKRIKDRMLAFGAEAALMSGSGPTVFALIKQYSRAKRVYNGLRGFCEEVYMVRPWSESENDTIN</sequence>